<proteinExistence type="inferred from homology"/>
<organism>
    <name type="scientific">Moorella thermoacetica (strain ATCC 39073 / JCM 9320)</name>
    <dbReference type="NCBI Taxonomy" id="264732"/>
    <lineage>
        <taxon>Bacteria</taxon>
        <taxon>Bacillati</taxon>
        <taxon>Bacillota</taxon>
        <taxon>Clostridia</taxon>
        <taxon>Moorellales</taxon>
        <taxon>Moorellaceae</taxon>
        <taxon>Moorella</taxon>
    </lineage>
</organism>
<evidence type="ECO:0000255" key="1">
    <source>
        <dbReference type="HAMAP-Rule" id="MF_00248"/>
    </source>
</evidence>
<dbReference type="EC" id="3.4.25.2" evidence="1"/>
<dbReference type="EMBL" id="CP000232">
    <property type="protein sequence ID" value="ABC19343.1"/>
    <property type="molecule type" value="Genomic_DNA"/>
</dbReference>
<dbReference type="RefSeq" id="YP_429886.1">
    <property type="nucleotide sequence ID" value="NC_007644.1"/>
</dbReference>
<dbReference type="SMR" id="Q2RJP6"/>
<dbReference type="STRING" id="264732.Moth_1029"/>
<dbReference type="MEROPS" id="T01.007"/>
<dbReference type="EnsemblBacteria" id="ABC19343">
    <property type="protein sequence ID" value="ABC19343"/>
    <property type="gene ID" value="Moth_1029"/>
</dbReference>
<dbReference type="KEGG" id="mta:Moth_1029"/>
<dbReference type="PATRIC" id="fig|264732.11.peg.1109"/>
<dbReference type="eggNOG" id="COG5405">
    <property type="taxonomic scope" value="Bacteria"/>
</dbReference>
<dbReference type="HOGENOM" id="CLU_093872_1_0_9"/>
<dbReference type="OrthoDB" id="9804884at2"/>
<dbReference type="GO" id="GO:0009376">
    <property type="term" value="C:HslUV protease complex"/>
    <property type="evidence" value="ECO:0007669"/>
    <property type="project" value="UniProtKB-UniRule"/>
</dbReference>
<dbReference type="GO" id="GO:0005839">
    <property type="term" value="C:proteasome core complex"/>
    <property type="evidence" value="ECO:0007669"/>
    <property type="project" value="InterPro"/>
</dbReference>
<dbReference type="GO" id="GO:0046872">
    <property type="term" value="F:metal ion binding"/>
    <property type="evidence" value="ECO:0007669"/>
    <property type="project" value="UniProtKB-KW"/>
</dbReference>
<dbReference type="GO" id="GO:0004298">
    <property type="term" value="F:threonine-type endopeptidase activity"/>
    <property type="evidence" value="ECO:0007669"/>
    <property type="project" value="UniProtKB-KW"/>
</dbReference>
<dbReference type="GO" id="GO:0051603">
    <property type="term" value="P:proteolysis involved in protein catabolic process"/>
    <property type="evidence" value="ECO:0007669"/>
    <property type="project" value="InterPro"/>
</dbReference>
<dbReference type="CDD" id="cd01913">
    <property type="entry name" value="protease_HslV"/>
    <property type="match status" value="1"/>
</dbReference>
<dbReference type="FunFam" id="3.60.20.10:FF:000002">
    <property type="entry name" value="ATP-dependent protease subunit HslV"/>
    <property type="match status" value="1"/>
</dbReference>
<dbReference type="Gene3D" id="3.60.20.10">
    <property type="entry name" value="Glutamine Phosphoribosylpyrophosphate, subunit 1, domain 1"/>
    <property type="match status" value="1"/>
</dbReference>
<dbReference type="HAMAP" id="MF_00248">
    <property type="entry name" value="HslV"/>
    <property type="match status" value="1"/>
</dbReference>
<dbReference type="InterPro" id="IPR022281">
    <property type="entry name" value="ATP-dep_Prtase_HsIV_su"/>
</dbReference>
<dbReference type="InterPro" id="IPR029055">
    <property type="entry name" value="Ntn_hydrolases_N"/>
</dbReference>
<dbReference type="InterPro" id="IPR001353">
    <property type="entry name" value="Proteasome_sua/b"/>
</dbReference>
<dbReference type="InterPro" id="IPR023333">
    <property type="entry name" value="Proteasome_suB-type"/>
</dbReference>
<dbReference type="NCBIfam" id="TIGR03692">
    <property type="entry name" value="ATP_dep_HslV"/>
    <property type="match status" value="1"/>
</dbReference>
<dbReference type="NCBIfam" id="NF003964">
    <property type="entry name" value="PRK05456.1"/>
    <property type="match status" value="1"/>
</dbReference>
<dbReference type="PANTHER" id="PTHR32194:SF0">
    <property type="entry name" value="ATP-DEPENDENT PROTEASE SUBUNIT HSLV"/>
    <property type="match status" value="1"/>
</dbReference>
<dbReference type="PANTHER" id="PTHR32194">
    <property type="entry name" value="METALLOPROTEASE TLDD"/>
    <property type="match status" value="1"/>
</dbReference>
<dbReference type="Pfam" id="PF00227">
    <property type="entry name" value="Proteasome"/>
    <property type="match status" value="1"/>
</dbReference>
<dbReference type="PIRSF" id="PIRSF039093">
    <property type="entry name" value="HslV"/>
    <property type="match status" value="1"/>
</dbReference>
<dbReference type="SUPFAM" id="SSF56235">
    <property type="entry name" value="N-terminal nucleophile aminohydrolases (Ntn hydrolases)"/>
    <property type="match status" value="1"/>
</dbReference>
<dbReference type="PROSITE" id="PS51476">
    <property type="entry name" value="PROTEASOME_BETA_2"/>
    <property type="match status" value="1"/>
</dbReference>
<sequence length="174" mass="18864">MEGTTVIAVRHQGRVALAGDGQVTFGNTVMKHKARKVRRLYQDRVLAGFAGSVADAFTLFEKFEAKLETYHGNLQRAAVELGKEWRTDRFLRRLEALLVVADKEHLLIISGNGEIVEPDDGIAAIGSGGPYALAAARALVAHTSMTAGEIAREAMNIAASICIYTNNNIIVEEL</sequence>
<reference key="1">
    <citation type="journal article" date="2008" name="Environ. Microbiol.">
        <title>The complete genome sequence of Moorella thermoacetica (f. Clostridium thermoaceticum).</title>
        <authorList>
            <person name="Pierce E."/>
            <person name="Xie G."/>
            <person name="Barabote R.D."/>
            <person name="Saunders E."/>
            <person name="Han C.S."/>
            <person name="Detter J.C."/>
            <person name="Richardson P."/>
            <person name="Brettin T.S."/>
            <person name="Das A."/>
            <person name="Ljungdahl L.G."/>
            <person name="Ragsdale S.W."/>
        </authorList>
    </citation>
    <scope>NUCLEOTIDE SEQUENCE [LARGE SCALE GENOMIC DNA]</scope>
    <source>
        <strain>ATCC 39073 / JCM 9320</strain>
    </source>
</reference>
<accession>Q2RJP6</accession>
<name>HSLV_MOOTA</name>
<comment type="function">
    <text evidence="1">Protease subunit of a proteasome-like degradation complex believed to be a general protein degrading machinery.</text>
</comment>
<comment type="catalytic activity">
    <reaction evidence="1">
        <text>ATP-dependent cleavage of peptide bonds with broad specificity.</text>
        <dbReference type="EC" id="3.4.25.2"/>
    </reaction>
</comment>
<comment type="activity regulation">
    <text evidence="1">Allosterically activated by HslU binding.</text>
</comment>
<comment type="subunit">
    <text evidence="1">A double ring-shaped homohexamer of HslV is capped on each side by a ring-shaped HslU homohexamer. The assembly of the HslU/HslV complex is dependent on binding of ATP.</text>
</comment>
<comment type="subcellular location">
    <subcellularLocation>
        <location evidence="1">Cytoplasm</location>
    </subcellularLocation>
</comment>
<comment type="similarity">
    <text evidence="1">Belongs to the peptidase T1B family. HslV subfamily.</text>
</comment>
<gene>
    <name evidence="1" type="primary">hslV</name>
    <name type="ordered locus">Moth_1029</name>
</gene>
<feature type="chain" id="PRO_0000336780" description="ATP-dependent protease subunit HslV">
    <location>
        <begin position="1"/>
        <end position="174"/>
    </location>
</feature>
<feature type="active site" evidence="1">
    <location>
        <position position="4"/>
    </location>
</feature>
<feature type="binding site" evidence="1">
    <location>
        <position position="159"/>
    </location>
    <ligand>
        <name>Na(+)</name>
        <dbReference type="ChEBI" id="CHEBI:29101"/>
    </ligand>
</feature>
<feature type="binding site" evidence="1">
    <location>
        <position position="162"/>
    </location>
    <ligand>
        <name>Na(+)</name>
        <dbReference type="ChEBI" id="CHEBI:29101"/>
    </ligand>
</feature>
<feature type="binding site" evidence="1">
    <location>
        <position position="165"/>
    </location>
    <ligand>
        <name>Na(+)</name>
        <dbReference type="ChEBI" id="CHEBI:29101"/>
    </ligand>
</feature>
<keyword id="KW-0021">Allosteric enzyme</keyword>
<keyword id="KW-0963">Cytoplasm</keyword>
<keyword id="KW-0378">Hydrolase</keyword>
<keyword id="KW-0479">Metal-binding</keyword>
<keyword id="KW-0645">Protease</keyword>
<keyword id="KW-0915">Sodium</keyword>
<keyword id="KW-0888">Threonine protease</keyword>
<protein>
    <recommendedName>
        <fullName evidence="1">ATP-dependent protease subunit HslV</fullName>
        <ecNumber evidence="1">3.4.25.2</ecNumber>
    </recommendedName>
</protein>